<organism>
    <name type="scientific">Mesobuthus gibbosus</name>
    <name type="common">Mediterranean checkered scorpion</name>
    <name type="synonym">Buthus gibbosus</name>
    <dbReference type="NCBI Taxonomy" id="123226"/>
    <lineage>
        <taxon>Eukaryota</taxon>
        <taxon>Metazoa</taxon>
        <taxon>Ecdysozoa</taxon>
        <taxon>Arthropoda</taxon>
        <taxon>Chelicerata</taxon>
        <taxon>Arachnida</taxon>
        <taxon>Scorpiones</taxon>
        <taxon>Buthida</taxon>
        <taxon>Buthoidea</taxon>
        <taxon>Buthidae</taxon>
        <taxon>Mesobuthus</taxon>
    </lineage>
</organism>
<name>KBX1_MESGB</name>
<dbReference type="EMBL" id="KF770824">
    <property type="protein sequence ID" value="AHZ63133.1"/>
    <property type="molecule type" value="mRNA"/>
</dbReference>
<dbReference type="SMR" id="A0A059UI30"/>
<dbReference type="GO" id="GO:0005576">
    <property type="term" value="C:extracellular region"/>
    <property type="evidence" value="ECO:0007669"/>
    <property type="project" value="UniProtKB-SubCell"/>
</dbReference>
<dbReference type="GO" id="GO:0015459">
    <property type="term" value="F:potassium channel regulator activity"/>
    <property type="evidence" value="ECO:0007669"/>
    <property type="project" value="UniProtKB-KW"/>
</dbReference>
<dbReference type="GO" id="GO:0090729">
    <property type="term" value="F:toxin activity"/>
    <property type="evidence" value="ECO:0007669"/>
    <property type="project" value="UniProtKB-KW"/>
</dbReference>
<dbReference type="InterPro" id="IPR029237">
    <property type="entry name" value="Long_scorpion_toxin_alpha/beta"/>
</dbReference>
<dbReference type="Pfam" id="PF14866">
    <property type="entry name" value="Scorpion_toxin_alpha-beta"/>
    <property type="match status" value="1"/>
</dbReference>
<dbReference type="PROSITE" id="PS51862">
    <property type="entry name" value="BSPN_CSAB"/>
    <property type="match status" value="1"/>
</dbReference>
<keyword id="KW-1015">Disulfide bond</keyword>
<keyword id="KW-0872">Ion channel impairing toxin</keyword>
<keyword id="KW-0528">Neurotoxin</keyword>
<keyword id="KW-0632">Potassium channel impairing toxin</keyword>
<keyword id="KW-0964">Secreted</keyword>
<keyword id="KW-0732">Signal</keyword>
<keyword id="KW-0800">Toxin</keyword>
<comment type="function">
    <text evidence="1">Inhibits voltage-gated potassium channel.</text>
</comment>
<comment type="subcellular location">
    <subcellularLocation>
        <location evidence="7">Secreted</location>
    </subcellularLocation>
</comment>
<comment type="tissue specificity">
    <text evidence="7">Expressed by the venom gland.</text>
</comment>
<comment type="similarity">
    <text evidence="6">Belongs to the long chain scorpion toxin family. Class 1 subfamily.</text>
</comment>
<feature type="signal peptide" evidence="3">
    <location>
        <begin position="1"/>
        <end position="19"/>
    </location>
</feature>
<feature type="propeptide" id="PRO_0000433151" evidence="2">
    <location>
        <begin position="20"/>
        <end position="27"/>
    </location>
</feature>
<feature type="chain" id="PRO_0000433152" description="Potassium channel toxin Meg-beta-KTx1">
    <location>
        <begin position="28"/>
        <end position="91"/>
    </location>
</feature>
<feature type="domain" description="BetaSPN-type CS-alpha/beta" evidence="4">
    <location>
        <begin position="54"/>
        <end position="91"/>
    </location>
</feature>
<feature type="disulfide bond" evidence="4">
    <location>
        <begin position="57"/>
        <end position="78"/>
    </location>
</feature>
<feature type="disulfide bond" evidence="4">
    <location>
        <begin position="64"/>
        <end position="83"/>
    </location>
</feature>
<feature type="disulfide bond" evidence="4">
    <location>
        <begin position="68"/>
        <end position="85"/>
    </location>
</feature>
<accession>A0A059UI30</accession>
<proteinExistence type="inferred from homology"/>
<reference key="1">
    <citation type="journal article" date="2014" name="BMC Genomics">
        <title>The Mediterranean scorpion Mesobuthus gibbosus (Scorpiones, Buthidae): transcriptome analysis and organization of the genome encoding chlorotoxin-like peptides.</title>
        <authorList>
            <person name="Diego-Garcia E."/>
            <person name="Caliskan F."/>
            <person name="Tytgat J."/>
        </authorList>
    </citation>
    <scope>NUCLEOTIDE SEQUENCE [MRNA]</scope>
    <source>
        <tissue>Venom gland</tissue>
    </source>
</reference>
<evidence type="ECO:0000250" key="1">
    <source>
        <dbReference type="UniProtKB" id="P69940"/>
    </source>
</evidence>
<evidence type="ECO:0000250" key="2">
    <source>
        <dbReference type="UniProtKB" id="Q9N661"/>
    </source>
</evidence>
<evidence type="ECO:0000255" key="3"/>
<evidence type="ECO:0000255" key="4">
    <source>
        <dbReference type="PROSITE-ProRule" id="PRU01209"/>
    </source>
</evidence>
<evidence type="ECO:0000303" key="5">
    <source>
    </source>
</evidence>
<evidence type="ECO:0000305" key="6"/>
<evidence type="ECO:0000305" key="7">
    <source>
    </source>
</evidence>
<protein>
    <recommendedName>
        <fullName evidence="5">Potassium channel toxin Meg-beta-KTx1</fullName>
        <shortName evidence="5">MegbetaKTx1</shortName>
    </recommendedName>
    <alternativeName>
        <fullName evidence="5">Beta potassium channel toxin 1</fullName>
    </alternativeName>
</protein>
<sequence length="91" mass="10211">MQRNLVVLLFLGMVALSSCGLREKHFQKLVKYAVPEGTLRTIIQTAVHKLGKTQFGCPAYQGYCDDHCQDIKKQEGFCHGFKCKCGIPMGF</sequence>